<sequence>MREIVHLQTGQCRNQIGAKFWEVVSDEHGIEPDGLYKGNNDLQLERISVYYNEVGANKYVPRAVLVDLEPGTMDSVRSGPLGSLFRPDNFVFGQSGGGNNWAKGHYTEGAELVDAVLDVVRKEAEGTDCLQGFQITHSLGGGTGAGMGTLLISKIREEYPDRMMCTYSVVPSPKVSDTVVEPYNATLSVHQLVENSDETFCIDNEALYDICFRTLKLTTPTYGDLNHLISIVMSGITTCLRFPGQLNSDLRKLAVNMVPFPRLHFFMPGVCPLTARGSQQYRAVTVPELTQQMFDAKNMMAASDPRHGRYLTVAAVFRGKVSMKEVEEQMQNVQNKNSAYFVEWIPNNVLTAQCDIPPRGCKMAVTFLGNSTAIQELFKRVNDQFAAMFKRKAFLHWYTQEGMDEMEFTEAESNMQDLVAEYQQYQDATADEEEGEYEEEPAEEEQ</sequence>
<accession>Q92268</accession>
<accession>O13509</accession>
<proteinExistence type="evidence at transcript level"/>
<keyword id="KW-0963">Cytoplasm</keyword>
<keyword id="KW-0206">Cytoskeleton</keyword>
<keyword id="KW-0342">GTP-binding</keyword>
<keyword id="KW-0460">Magnesium</keyword>
<keyword id="KW-0479">Metal-binding</keyword>
<keyword id="KW-0493">Microtubule</keyword>
<keyword id="KW-0547">Nucleotide-binding</keyword>
<feature type="chain" id="PRO_0000048426" description="Tubulin beta chain">
    <location>
        <begin position="1"/>
        <end position="446"/>
    </location>
</feature>
<feature type="region of interest" description="Disordered" evidence="3">
    <location>
        <begin position="423"/>
        <end position="446"/>
    </location>
</feature>
<feature type="compositionally biased region" description="Acidic residues" evidence="3">
    <location>
        <begin position="429"/>
        <end position="446"/>
    </location>
</feature>
<feature type="binding site" evidence="2">
    <location>
        <position position="11"/>
    </location>
    <ligand>
        <name>GTP</name>
        <dbReference type="ChEBI" id="CHEBI:37565"/>
    </ligand>
</feature>
<feature type="binding site" evidence="1">
    <location>
        <position position="69"/>
    </location>
    <ligand>
        <name>GTP</name>
        <dbReference type="ChEBI" id="CHEBI:37565"/>
    </ligand>
</feature>
<feature type="binding site" evidence="1">
    <location>
        <position position="69"/>
    </location>
    <ligand>
        <name>Mg(2+)</name>
        <dbReference type="ChEBI" id="CHEBI:18420"/>
    </ligand>
</feature>
<feature type="binding site" evidence="2">
    <location>
        <position position="138"/>
    </location>
    <ligand>
        <name>GTP</name>
        <dbReference type="ChEBI" id="CHEBI:37565"/>
    </ligand>
</feature>
<feature type="binding site" evidence="2">
    <location>
        <position position="142"/>
    </location>
    <ligand>
        <name>GTP</name>
        <dbReference type="ChEBI" id="CHEBI:37565"/>
    </ligand>
</feature>
<feature type="binding site" evidence="2">
    <location>
        <position position="143"/>
    </location>
    <ligand>
        <name>GTP</name>
        <dbReference type="ChEBI" id="CHEBI:37565"/>
    </ligand>
</feature>
<feature type="binding site" evidence="2">
    <location>
        <position position="144"/>
    </location>
    <ligand>
        <name>GTP</name>
        <dbReference type="ChEBI" id="CHEBI:37565"/>
    </ligand>
</feature>
<feature type="binding site" evidence="2">
    <location>
        <position position="204"/>
    </location>
    <ligand>
        <name>GTP</name>
        <dbReference type="ChEBI" id="CHEBI:37565"/>
    </ligand>
</feature>
<feature type="binding site" evidence="2">
    <location>
        <position position="226"/>
    </location>
    <ligand>
        <name>GTP</name>
        <dbReference type="ChEBI" id="CHEBI:37565"/>
    </ligand>
</feature>
<feature type="sequence conflict" description="In Ref. 2; AAB63288." evidence="4" ref="2">
    <original>R</original>
    <variation>G</variation>
    <location>
        <position position="13"/>
    </location>
</feature>
<feature type="sequence conflict" description="In Ref. 2; AAB63288." evidence="4" ref="2">
    <original>G</original>
    <variation>A</variation>
    <location>
        <position position="82"/>
    </location>
</feature>
<feature type="sequence conflict" description="In Ref. 2; AAB63288." evidence="4" ref="2">
    <original>G</original>
    <variation>A</variation>
    <location>
        <position position="97"/>
    </location>
</feature>
<feature type="sequence conflict" description="In Ref. 2; AAB63288." evidence="4" ref="2">
    <original>V</original>
    <variation>L</variation>
    <location>
        <position position="270"/>
    </location>
</feature>
<comment type="function">
    <text>Tubulin is the major constituent of microtubules, a cylinder consisting of laterally associated linear protofilaments composed of alpha- and beta-tubulin heterodimers. Microtubules grow by the addition of GTP-tubulin dimers to the microtubule end, where a stabilizing cap forms. Below the cap, tubulin dimers are in GDP-bound state, owing to GTPase activity of alpha-tubulin.</text>
</comment>
<comment type="cofactor">
    <cofactor evidence="1">
        <name>Mg(2+)</name>
        <dbReference type="ChEBI" id="CHEBI:18420"/>
    </cofactor>
</comment>
<comment type="subunit">
    <text>Dimer of alpha and beta chains. A typical microtubule is a hollow water-filled tube with an outer diameter of 25 nm and an inner diameter of 15 nM. Alpha-beta heterodimers associate head-to-tail to form protofilaments running lengthwise along the microtubule wall with the beta-tubulin subunit facing the microtubule plus end conferring a structural polarity. Microtubules usually have 13 protofilaments but different protofilament numbers can be found in some organisms and specialized cells.</text>
</comment>
<comment type="subcellular location">
    <subcellularLocation>
        <location>Cytoplasm</location>
        <location>Cytoskeleton</location>
    </subcellularLocation>
</comment>
<comment type="similarity">
    <text evidence="4">Belongs to the tubulin family.</text>
</comment>
<name>TBB_PLESA</name>
<dbReference type="EMBL" id="U64720">
    <property type="protein sequence ID" value="AAB61260.1"/>
    <property type="molecule type" value="mRNA"/>
</dbReference>
<dbReference type="EMBL" id="AF008134">
    <property type="protein sequence ID" value="AAB63288.1"/>
    <property type="molecule type" value="mRNA"/>
</dbReference>
<dbReference type="SMR" id="Q92268"/>
<dbReference type="GO" id="GO:0005737">
    <property type="term" value="C:cytoplasm"/>
    <property type="evidence" value="ECO:0007669"/>
    <property type="project" value="UniProtKB-KW"/>
</dbReference>
<dbReference type="GO" id="GO:0005874">
    <property type="term" value="C:microtubule"/>
    <property type="evidence" value="ECO:0007669"/>
    <property type="project" value="UniProtKB-KW"/>
</dbReference>
<dbReference type="GO" id="GO:0005525">
    <property type="term" value="F:GTP binding"/>
    <property type="evidence" value="ECO:0007669"/>
    <property type="project" value="UniProtKB-KW"/>
</dbReference>
<dbReference type="GO" id="GO:0003924">
    <property type="term" value="F:GTPase activity"/>
    <property type="evidence" value="ECO:0007669"/>
    <property type="project" value="InterPro"/>
</dbReference>
<dbReference type="GO" id="GO:0046872">
    <property type="term" value="F:metal ion binding"/>
    <property type="evidence" value="ECO:0007669"/>
    <property type="project" value="UniProtKB-KW"/>
</dbReference>
<dbReference type="GO" id="GO:0005200">
    <property type="term" value="F:structural constituent of cytoskeleton"/>
    <property type="evidence" value="ECO:0007669"/>
    <property type="project" value="InterPro"/>
</dbReference>
<dbReference type="GO" id="GO:0007017">
    <property type="term" value="P:microtubule-based process"/>
    <property type="evidence" value="ECO:0007669"/>
    <property type="project" value="InterPro"/>
</dbReference>
<dbReference type="CDD" id="cd02187">
    <property type="entry name" value="beta_tubulin"/>
    <property type="match status" value="1"/>
</dbReference>
<dbReference type="FunFam" id="1.10.287.600:FF:000006">
    <property type="entry name" value="Tubulin beta chain"/>
    <property type="match status" value="1"/>
</dbReference>
<dbReference type="FunFam" id="3.30.1330.20:FF:000002">
    <property type="entry name" value="Tubulin beta chain"/>
    <property type="match status" value="1"/>
</dbReference>
<dbReference type="FunFam" id="3.40.50.1440:FF:000003">
    <property type="entry name" value="Tubulin beta chain"/>
    <property type="match status" value="1"/>
</dbReference>
<dbReference type="Gene3D" id="1.10.287.600">
    <property type="entry name" value="Helix hairpin bin"/>
    <property type="match status" value="1"/>
</dbReference>
<dbReference type="Gene3D" id="3.30.1330.20">
    <property type="entry name" value="Tubulin/FtsZ, C-terminal domain"/>
    <property type="match status" value="1"/>
</dbReference>
<dbReference type="Gene3D" id="3.40.50.1440">
    <property type="entry name" value="Tubulin/FtsZ, GTPase domain"/>
    <property type="match status" value="1"/>
</dbReference>
<dbReference type="InterPro" id="IPR013838">
    <property type="entry name" value="Beta-tubulin_BS"/>
</dbReference>
<dbReference type="InterPro" id="IPR002453">
    <property type="entry name" value="Beta_tubulin"/>
</dbReference>
<dbReference type="InterPro" id="IPR008280">
    <property type="entry name" value="Tub_FtsZ_C"/>
</dbReference>
<dbReference type="InterPro" id="IPR000217">
    <property type="entry name" value="Tubulin"/>
</dbReference>
<dbReference type="InterPro" id="IPR037103">
    <property type="entry name" value="Tubulin/FtsZ-like_C"/>
</dbReference>
<dbReference type="InterPro" id="IPR018316">
    <property type="entry name" value="Tubulin/FtsZ_2-layer-sand-dom"/>
</dbReference>
<dbReference type="InterPro" id="IPR036525">
    <property type="entry name" value="Tubulin/FtsZ_GTPase_sf"/>
</dbReference>
<dbReference type="InterPro" id="IPR023123">
    <property type="entry name" value="Tubulin_C"/>
</dbReference>
<dbReference type="InterPro" id="IPR017975">
    <property type="entry name" value="Tubulin_CS"/>
</dbReference>
<dbReference type="InterPro" id="IPR003008">
    <property type="entry name" value="Tubulin_FtsZ_GTPase"/>
</dbReference>
<dbReference type="PANTHER" id="PTHR11588">
    <property type="entry name" value="TUBULIN"/>
    <property type="match status" value="1"/>
</dbReference>
<dbReference type="Pfam" id="PF00091">
    <property type="entry name" value="Tubulin"/>
    <property type="match status" value="1"/>
</dbReference>
<dbReference type="Pfam" id="PF03953">
    <property type="entry name" value="Tubulin_C"/>
    <property type="match status" value="1"/>
</dbReference>
<dbReference type="PRINTS" id="PR01163">
    <property type="entry name" value="BETATUBULIN"/>
</dbReference>
<dbReference type="PRINTS" id="PR01161">
    <property type="entry name" value="TUBULIN"/>
</dbReference>
<dbReference type="SMART" id="SM00864">
    <property type="entry name" value="Tubulin"/>
    <property type="match status" value="1"/>
</dbReference>
<dbReference type="SMART" id="SM00865">
    <property type="entry name" value="Tubulin_C"/>
    <property type="match status" value="1"/>
</dbReference>
<dbReference type="SUPFAM" id="SSF55307">
    <property type="entry name" value="Tubulin C-terminal domain-like"/>
    <property type="match status" value="1"/>
</dbReference>
<dbReference type="SUPFAM" id="SSF52490">
    <property type="entry name" value="Tubulin nucleotide-binding domain-like"/>
    <property type="match status" value="1"/>
</dbReference>
<dbReference type="PROSITE" id="PS00227">
    <property type="entry name" value="TUBULIN"/>
    <property type="match status" value="1"/>
</dbReference>
<dbReference type="PROSITE" id="PS00228">
    <property type="entry name" value="TUBULIN_B_AUTOREG"/>
    <property type="match status" value="1"/>
</dbReference>
<evidence type="ECO:0000250" key="1">
    <source>
        <dbReference type="UniProtKB" id="P68363"/>
    </source>
</evidence>
<evidence type="ECO:0000250" key="2">
    <source>
        <dbReference type="UniProtKB" id="Q13509"/>
    </source>
</evidence>
<evidence type="ECO:0000256" key="3">
    <source>
        <dbReference type="SAM" id="MobiDB-lite"/>
    </source>
</evidence>
<evidence type="ECO:0000305" key="4"/>
<organism>
    <name type="scientific">Pleurotus sajor-caju</name>
    <name type="common">Oyster mushroom</name>
    <dbReference type="NCBI Taxonomy" id="50053"/>
    <lineage>
        <taxon>Eukaryota</taxon>
        <taxon>Fungi</taxon>
        <taxon>Dikarya</taxon>
        <taxon>Basidiomycota</taxon>
        <taxon>Agaricomycotina</taxon>
        <taxon>Agaricomycetes</taxon>
        <taxon>Polyporales</taxon>
        <taxon>Polyporaceae</taxon>
        <taxon>Lentinus</taxon>
    </lineage>
</organism>
<reference key="1">
    <citation type="submission" date="1996-09" db="EMBL/GenBank/DDBJ databases">
        <authorList>
            <person name="Kim B.G."/>
        </authorList>
    </citation>
    <scope>NUCLEOTIDE SEQUENCE [MRNA]</scope>
    <source>
        <strain>MGL2084</strain>
    </source>
</reference>
<reference key="2">
    <citation type="submission" date="1997-06" db="EMBL/GenBank/DDBJ databases">
        <authorList>
            <person name="Kim B.G."/>
        </authorList>
    </citation>
    <scope>NUCLEOTIDE SEQUENCE [MRNA]</scope>
    <source>
        <strain>MGL2084</strain>
    </source>
</reference>
<protein>
    <recommendedName>
        <fullName>Tubulin beta chain</fullName>
    </recommendedName>
    <alternativeName>
        <fullName>Beta-tubulin</fullName>
    </alternativeName>
</protein>